<comment type="subunit">
    <text evidence="1">Part of the 30S ribosomal subunit.</text>
</comment>
<comment type="subcellular location">
    <subcellularLocation>
        <location>Plastid</location>
        <location>Chloroplast</location>
    </subcellularLocation>
</comment>
<comment type="induction">
    <text>By abscisic acid (ABA) during heterophyllous induction.</text>
</comment>
<comment type="similarity">
    <text evidence="1">Belongs to the universal ribosomal protein uS11 family.</text>
</comment>
<comment type="sequence caution" evidence="2">
    <conflict type="erroneous initiation">
        <sequence resource="EMBL-CDS" id="AAK01151"/>
    </conflict>
</comment>
<gene>
    <name evidence="1" type="primary">rps11</name>
</gene>
<dbReference type="EMBL" id="AF311314">
    <property type="protein sequence ID" value="AAK01151.1"/>
    <property type="status" value="ALT_INIT"/>
    <property type="molecule type" value="mRNA"/>
</dbReference>
<dbReference type="SMR" id="Q9BBN1"/>
<dbReference type="GO" id="GO:0009507">
    <property type="term" value="C:chloroplast"/>
    <property type="evidence" value="ECO:0007669"/>
    <property type="project" value="UniProtKB-SubCell"/>
</dbReference>
<dbReference type="GO" id="GO:1990904">
    <property type="term" value="C:ribonucleoprotein complex"/>
    <property type="evidence" value="ECO:0007669"/>
    <property type="project" value="UniProtKB-KW"/>
</dbReference>
<dbReference type="GO" id="GO:0005840">
    <property type="term" value="C:ribosome"/>
    <property type="evidence" value="ECO:0007669"/>
    <property type="project" value="UniProtKB-KW"/>
</dbReference>
<dbReference type="GO" id="GO:0019843">
    <property type="term" value="F:rRNA binding"/>
    <property type="evidence" value="ECO:0007669"/>
    <property type="project" value="UniProtKB-UniRule"/>
</dbReference>
<dbReference type="GO" id="GO:0003735">
    <property type="term" value="F:structural constituent of ribosome"/>
    <property type="evidence" value="ECO:0007669"/>
    <property type="project" value="InterPro"/>
</dbReference>
<dbReference type="GO" id="GO:0006412">
    <property type="term" value="P:translation"/>
    <property type="evidence" value="ECO:0007669"/>
    <property type="project" value="UniProtKB-UniRule"/>
</dbReference>
<dbReference type="FunFam" id="3.30.420.80:FF:000010">
    <property type="entry name" value="30S ribosomal protein S11"/>
    <property type="match status" value="1"/>
</dbReference>
<dbReference type="Gene3D" id="3.30.420.80">
    <property type="entry name" value="Ribosomal protein S11"/>
    <property type="match status" value="1"/>
</dbReference>
<dbReference type="HAMAP" id="MF_01310">
    <property type="entry name" value="Ribosomal_uS11"/>
    <property type="match status" value="1"/>
</dbReference>
<dbReference type="InterPro" id="IPR001971">
    <property type="entry name" value="Ribosomal_uS11"/>
</dbReference>
<dbReference type="InterPro" id="IPR019981">
    <property type="entry name" value="Ribosomal_uS11_bac-type"/>
</dbReference>
<dbReference type="InterPro" id="IPR018102">
    <property type="entry name" value="Ribosomal_uS11_CS"/>
</dbReference>
<dbReference type="InterPro" id="IPR036967">
    <property type="entry name" value="Ribosomal_uS11_sf"/>
</dbReference>
<dbReference type="NCBIfam" id="NF003698">
    <property type="entry name" value="PRK05309.1"/>
    <property type="match status" value="1"/>
</dbReference>
<dbReference type="NCBIfam" id="TIGR03632">
    <property type="entry name" value="uS11_bact"/>
    <property type="match status" value="1"/>
</dbReference>
<dbReference type="PANTHER" id="PTHR11759">
    <property type="entry name" value="40S RIBOSOMAL PROTEIN S14/30S RIBOSOMAL PROTEIN S11"/>
    <property type="match status" value="1"/>
</dbReference>
<dbReference type="Pfam" id="PF00411">
    <property type="entry name" value="Ribosomal_S11"/>
    <property type="match status" value="1"/>
</dbReference>
<dbReference type="PIRSF" id="PIRSF002131">
    <property type="entry name" value="Ribosomal_S11"/>
    <property type="match status" value="1"/>
</dbReference>
<dbReference type="SUPFAM" id="SSF53137">
    <property type="entry name" value="Translational machinery components"/>
    <property type="match status" value="1"/>
</dbReference>
<dbReference type="PROSITE" id="PS00054">
    <property type="entry name" value="RIBOSOMAL_S11"/>
    <property type="match status" value="1"/>
</dbReference>
<geneLocation type="chloroplast"/>
<evidence type="ECO:0000255" key="1">
    <source>
        <dbReference type="HAMAP-Rule" id="MF_01310"/>
    </source>
</evidence>
<evidence type="ECO:0000305" key="2"/>
<reference key="1">
    <citation type="journal article" date="2001" name="Plant Mol. Biol.">
        <title>Early genes responsive to abscisic acid during heterophyllous induction in Marsilea quadrifolia.</title>
        <authorList>
            <person name="Hsu T.-C."/>
            <person name="Liu H.-C."/>
            <person name="Wang J.-S."/>
            <person name="Chen R.-W."/>
            <person name="Wang Y.-C."/>
            <person name="Lin B.-L."/>
        </authorList>
    </citation>
    <scope>NUCLEOTIDE SEQUENCE [MRNA]</scope>
    <source>
        <strain>ABRH19</strain>
        <tissue>Shoot apex</tissue>
    </source>
</reference>
<organism>
    <name type="scientific">Marsilea quadrifolia</name>
    <name type="common">European water clover</name>
    <dbReference type="NCBI Taxonomy" id="13816"/>
    <lineage>
        <taxon>Eukaryota</taxon>
        <taxon>Viridiplantae</taxon>
        <taxon>Streptophyta</taxon>
        <taxon>Embryophyta</taxon>
        <taxon>Tracheophyta</taxon>
        <taxon>Polypodiopsida</taxon>
        <taxon>Polypodiidae</taxon>
        <taxon>Salviniales</taxon>
        <taxon>Marsileaceae</taxon>
        <taxon>Marsilea</taxon>
    </lineage>
</organism>
<name>RR11_MARQU</name>
<proteinExistence type="evidence at transcript level"/>
<sequence>MSKISRKSRLRKGKRGVQKGIIHIQAGFNNTIITVTDVRGQVILWSSAGACGFKGTRRSTPFAAQAAAENAVRASMDRGLKQAEVMISGPGPGRDTALRAIRRSGVTLSFVRDVTPMPHNGCRPPKKRRV</sequence>
<protein>
    <recommendedName>
        <fullName evidence="1">Small ribosomal subunit protein uS11c</fullName>
    </recommendedName>
    <alternativeName>
        <fullName evidence="2">30S ribosomal protein S11, chloroplastic</fullName>
    </alternativeName>
</protein>
<accession>Q9BBN1</accession>
<feature type="chain" id="PRO_0000123308" description="Small ribosomal subunit protein uS11c">
    <location>
        <begin position="1"/>
        <end position="130"/>
    </location>
</feature>
<keyword id="KW-0150">Chloroplast</keyword>
<keyword id="KW-0934">Plastid</keyword>
<keyword id="KW-0687">Ribonucleoprotein</keyword>
<keyword id="KW-0689">Ribosomal protein</keyword>
<keyword id="KW-0694">RNA-binding</keyword>
<keyword id="KW-0699">rRNA-binding</keyword>